<organism>
    <name type="scientific">Trittame loki</name>
    <name type="common">Brush-footed trapdoor spider</name>
    <dbReference type="NCBI Taxonomy" id="1295018"/>
    <lineage>
        <taxon>Eukaryota</taxon>
        <taxon>Metazoa</taxon>
        <taxon>Ecdysozoa</taxon>
        <taxon>Arthropoda</taxon>
        <taxon>Chelicerata</taxon>
        <taxon>Arachnida</taxon>
        <taxon>Araneae</taxon>
        <taxon>Mygalomorphae</taxon>
        <taxon>Barychelidae</taxon>
        <taxon>Trittame</taxon>
    </lineage>
</organism>
<proteinExistence type="evidence at transcript level"/>
<evidence type="ECO:0000250" key="1"/>
<evidence type="ECO:0000255" key="2"/>
<evidence type="ECO:0000303" key="3">
    <source>
    </source>
</evidence>
<evidence type="ECO:0000305" key="4"/>
<reference key="1">
    <citation type="journal article" date="2013" name="Toxins">
        <title>A proteomics and transcriptomics investigation of the venom from the barychelid spider Trittame loki (brush-foot trapdoor).</title>
        <authorList>
            <person name="Undheim E.A."/>
            <person name="Sunagar K."/>
            <person name="Herzig V."/>
            <person name="Kely L."/>
            <person name="Low D.H."/>
            <person name="Jackson T.N."/>
            <person name="Jones A."/>
            <person name="Kurniawan N."/>
            <person name="King G.F."/>
            <person name="Ali S.A."/>
            <person name="Antunes A."/>
            <person name="Ruder T."/>
            <person name="Fry B.G."/>
        </authorList>
    </citation>
    <scope>NUCLEOTIDE SEQUENCE [MRNA]</scope>
    <source>
        <tissue>Venom gland</tissue>
    </source>
</reference>
<comment type="function">
    <text evidence="4">Ion channel inhibitor.</text>
</comment>
<comment type="subcellular location">
    <subcellularLocation>
        <location evidence="1">Secreted</location>
    </subcellularLocation>
</comment>
<comment type="tissue specificity">
    <text>Expressed by the venom gland.</text>
</comment>
<comment type="domain">
    <text evidence="1">The presence of a 'disulfide through disulfide knot' structurally defines this protein as a knottin.</text>
</comment>
<comment type="similarity">
    <text evidence="4">Belongs to the neurotoxin 14 (magi-1) family. 03 (ICK-30-40) subfamily.</text>
</comment>
<accession>W4VRW1</accession>
<keyword id="KW-0165">Cleavage on pair of basic residues</keyword>
<keyword id="KW-1015">Disulfide bond</keyword>
<keyword id="KW-0872">Ion channel impairing toxin</keyword>
<keyword id="KW-0960">Knottin</keyword>
<keyword id="KW-0964">Secreted</keyword>
<keyword id="KW-0732">Signal</keyword>
<keyword id="KW-0800">Toxin</keyword>
<sequence>MKTIIVFLSLLVLATKFGDAKEGVNQKQKKEVTQNEFREEYLNEMAAMSLVQQLEAIERALFENEAGRNSRQKRCLGENVPCGDNIPCCGKLSCEKTFGYPWWYKSPYCVKPSSG</sequence>
<protein>
    <recommendedName>
        <fullName>U17-barytoxin-Tl1c</fullName>
        <shortName>U17-BATX-Tl1c</shortName>
    </recommendedName>
    <alternativeName>
        <fullName evidence="3">Toxin ICK-37</fullName>
    </alternativeName>
</protein>
<dbReference type="EMBL" id="GAQE01000040">
    <property type="protein sequence ID" value="JAB84514.1"/>
    <property type="molecule type" value="Transcribed_RNA"/>
</dbReference>
<dbReference type="ArachnoServer" id="AS002048">
    <property type="toxin name" value="U17-barytoxin-Tl1c"/>
</dbReference>
<dbReference type="GO" id="GO:0005576">
    <property type="term" value="C:extracellular region"/>
    <property type="evidence" value="ECO:0007669"/>
    <property type="project" value="UniProtKB-SubCell"/>
</dbReference>
<dbReference type="GO" id="GO:0019871">
    <property type="term" value="F:sodium channel inhibitor activity"/>
    <property type="evidence" value="ECO:0007669"/>
    <property type="project" value="InterPro"/>
</dbReference>
<dbReference type="GO" id="GO:0090729">
    <property type="term" value="F:toxin activity"/>
    <property type="evidence" value="ECO:0007669"/>
    <property type="project" value="UniProtKB-KW"/>
</dbReference>
<dbReference type="InterPro" id="IPR012627">
    <property type="entry name" value="Toxin_22"/>
</dbReference>
<dbReference type="Pfam" id="PF08092">
    <property type="entry name" value="Toxin_22"/>
    <property type="match status" value="1"/>
</dbReference>
<feature type="signal peptide" evidence="2">
    <location>
        <begin position="1"/>
        <end position="20"/>
    </location>
</feature>
<feature type="propeptide" id="PRO_0000435160" evidence="4">
    <location>
        <begin position="21"/>
        <end position="74"/>
    </location>
</feature>
<feature type="chain" id="PRO_0000429244" description="U17-barytoxin-Tl1c">
    <location>
        <begin position="75"/>
        <end position="115"/>
    </location>
</feature>
<feature type="disulfide bond" evidence="1">
    <location>
        <begin position="75"/>
        <end position="89"/>
    </location>
</feature>
<feature type="disulfide bond" evidence="1">
    <location>
        <begin position="82"/>
        <end position="94"/>
    </location>
</feature>
<feature type="disulfide bond" evidence="1">
    <location>
        <begin position="88"/>
        <end position="109"/>
    </location>
</feature>
<name>ICK37_TRILK</name>